<reference key="1">
    <citation type="journal article" date="1994" name="J. Biol. Chem.">
        <title>Cloning and expression of myelin-associated oligodendrocytic basic protein. A novel basic protein constituting the central nervous system myelin.</title>
        <authorList>
            <person name="Yamamoto Y."/>
            <person name="Mizuno R."/>
            <person name="Nishimura T."/>
            <person name="Ogawa Y."/>
            <person name="Yoshikawa H."/>
            <person name="Fujimura H."/>
            <person name="Adachi E."/>
            <person name="Kishimoto T."/>
            <person name="Yanagihara T."/>
            <person name="Sakoda S."/>
        </authorList>
    </citation>
    <scope>NUCLEOTIDE SEQUENCE [MRNA] (ISOFORMS 1 AND 6)</scope>
    <scope>FUNCTION</scope>
    <scope>ALTERNATIVE SPLICING</scope>
    <source>
        <strain>Sprague-Dawley</strain>
        <tissue>Spinal cord</tissue>
    </source>
</reference>
<reference key="2">
    <citation type="journal article" date="1999" name="J. Neurochem.">
        <title>Myelin-associated oligodendrocytic basic protein mRNAs reside at different subcellular locations.</title>
        <authorList>
            <person name="Gould R.M."/>
            <person name="Freund C.M."/>
            <person name="Barbarese E."/>
        </authorList>
    </citation>
    <scope>NUCLEOTIDE SEQUENCE [MRNA] (ISOFORM 2)</scope>
    <scope>PROTEIN SEQUENCE OF 2-15</scope>
    <scope>SUBCELLULAR LOCATION</scope>
    <scope>TISSUE SPECIFICITY</scope>
    <scope>ALTERNATIVE SPLICING</scope>
</reference>
<reference key="3">
    <citation type="journal article" date="1996" name="J. Neurosci.">
        <title>Molecular and developmental characterization of novel cDNAs of the myelin-associated/oligodendrocytic basic protein.</title>
        <authorList>
            <person name="Holz A."/>
            <person name="Schaeren-Wiemers N."/>
            <person name="Schaefer C."/>
            <person name="Pott U."/>
            <person name="Colello R.J."/>
            <person name="Schwab M.E."/>
        </authorList>
    </citation>
    <scope>NUCLEOTIDE SEQUENCE [MRNA] (ISOFORMS 3; 4 AND 5)</scope>
    <scope>SUBCELLULAR LOCATION</scope>
    <scope>ALTERNATIVE SPLICING</scope>
    <scope>TISSUE SPECIFICITY</scope>
    <scope>DEVELOPMENTAL STAGE</scope>
    <source>
        <strain>Lewis</strain>
        <tissue>Oligodendrocyte</tissue>
    </source>
</reference>
<reference key="4">
    <citation type="journal article" date="2004" name="Genome Res.">
        <title>The status, quality, and expansion of the NIH full-length cDNA project: the Mammalian Gene Collection (MGC).</title>
        <authorList>
            <consortium name="The MGC Project Team"/>
        </authorList>
    </citation>
    <scope>NUCLEOTIDE SEQUENCE [LARGE SCALE MRNA] (ISOFORM 5)</scope>
    <source>
        <tissue>Brain</tissue>
    </source>
</reference>
<reference key="5">
    <citation type="journal article" date="2012" name="Nat. Commun.">
        <title>Quantitative maps of protein phosphorylation sites across 14 different rat organs and tissues.</title>
        <authorList>
            <person name="Lundby A."/>
            <person name="Secher A."/>
            <person name="Lage K."/>
            <person name="Nordsborg N.B."/>
            <person name="Dmytriyev A."/>
            <person name="Lundby C."/>
            <person name="Olsen J.V."/>
        </authorList>
    </citation>
    <scope>PHOSPHORYLATION [LARGE SCALE ANALYSIS] AT SER-85; SER-98 AND SER-107</scope>
    <scope>IDENTIFICATION BY MASS SPECTROMETRY [LARGE SCALE ANALYSIS]</scope>
</reference>
<comment type="function">
    <text evidence="3">May play a role in compacting or stabilizing the myelin sheath, possibly by binding the negatively charged acidic phospholipids of the cytoplasmic membrane.</text>
</comment>
<comment type="subcellular location">
    <subcellularLocation>
        <location evidence="2 4">Cytoplasm</location>
        <location evidence="2 4">Perinuclear region</location>
    </subcellularLocation>
    <text>Present in the major dense line of CNS myelin. Isoform 5 may be differentially localized in the oligodendrocytes or perinuclear region. Isoform 2, 4, 5 and 6 are highly enriched in myelin. Isoform 1 and 3 are not enriched in mylein.</text>
</comment>
<comment type="alternative products">
    <event type="alternative splicing"/>
    <isoform>
        <id>Q63327-1</id>
        <name>1</name>
        <name>rOPRP1</name>
        <sequence type="displayed"/>
    </isoform>
    <isoform>
        <id>Q63327-2</id>
        <name>2</name>
        <name>MOBP169</name>
        <sequence type="described" ref="VSP_023951"/>
    </isoform>
    <isoform>
        <id>Q63327-3</id>
        <name>3</name>
        <name>MOBP69</name>
        <sequence type="described" ref="VSP_023946 VSP_023947"/>
    </isoform>
    <isoform>
        <id>Q63327-4</id>
        <name>4</name>
        <name>MOBP99</name>
        <sequence type="described" ref="VSP_023943 VSP_023950"/>
    </isoform>
    <isoform>
        <id>Q63327-5</id>
        <name>5</name>
        <name>MOBP81-A</name>
        <name>MOBP81-B</name>
        <sequence type="described" ref="VSP_023944 VSP_023949"/>
    </isoform>
    <isoform>
        <id>Q63327-6</id>
        <name>6</name>
        <name>rOP1</name>
        <name>MOBP71</name>
        <sequence type="described" ref="VSP_023945 VSP_023948"/>
    </isoform>
</comment>
<comment type="tissue specificity">
    <text evidence="2 4">Expressed predominantly in oligodendrocytes, in CNS myelin of the cerebrum and spinal cord. No expression seen in sciatic nerve.</text>
</comment>
<comment type="developmental stage">
    <text evidence="4">Expression in different brain regions during development is correlated with the progression of myelin formation. Isoform 5 seems to be the most abundant spliced form expressed during development. Expressed at P7 in optic nerve, at this time point, the first compact myelin is formed. At P9 abundantly expressed in the optic nerve.</text>
</comment>
<gene>
    <name type="primary">Mobp</name>
</gene>
<protein>
    <recommendedName>
        <fullName>Myelin-associated oligodendrocyte basic protein</fullName>
    </recommendedName>
</protein>
<keyword id="KW-0025">Alternative splicing</keyword>
<keyword id="KW-0963">Cytoplasm</keyword>
<keyword id="KW-0903">Direct protein sequencing</keyword>
<keyword id="KW-0597">Phosphoprotein</keyword>
<keyword id="KW-1185">Reference proteome</keyword>
<keyword id="KW-0677">Repeat</keyword>
<dbReference type="EMBL" id="D28110">
    <property type="protein sequence ID" value="BAA05657.1"/>
    <property type="molecule type" value="mRNA"/>
</dbReference>
<dbReference type="EMBL" id="D28111">
    <property type="protein sequence ID" value="BAA05658.1"/>
    <property type="molecule type" value="mRNA"/>
</dbReference>
<dbReference type="EMBL" id="AF157498">
    <property type="protein sequence ID" value="AAD44968.1"/>
    <property type="molecule type" value="mRNA"/>
</dbReference>
<dbReference type="EMBL" id="X87900">
    <property type="protein sequence ID" value="CAA61151.1"/>
    <property type="molecule type" value="mRNA"/>
</dbReference>
<dbReference type="EMBL" id="X89637">
    <property type="protein sequence ID" value="CAA61795.1"/>
    <property type="molecule type" value="mRNA"/>
</dbReference>
<dbReference type="EMBL" id="X89638">
    <property type="protein sequence ID" value="CAA61796.1"/>
    <property type="molecule type" value="mRNA"/>
</dbReference>
<dbReference type="EMBL" id="X90402">
    <property type="protein sequence ID" value="CAA62039.1"/>
    <property type="molecule type" value="mRNA"/>
</dbReference>
<dbReference type="EMBL" id="BC087694">
    <property type="protein sequence ID" value="AAH87694.1"/>
    <property type="molecule type" value="mRNA"/>
</dbReference>
<dbReference type="PIR" id="B55663">
    <property type="entry name" value="B55663"/>
</dbReference>
<dbReference type="RefSeq" id="NP_001376201.1">
    <molecule id="Q63327-1"/>
    <property type="nucleotide sequence ID" value="NM_001389272.1"/>
</dbReference>
<dbReference type="RefSeq" id="NP_001376202.1">
    <molecule id="Q63327-1"/>
    <property type="nucleotide sequence ID" value="NM_001389273.1"/>
</dbReference>
<dbReference type="RefSeq" id="NP_036852.1">
    <molecule id="Q63327-5"/>
    <property type="nucleotide sequence ID" value="NM_012720.2"/>
</dbReference>
<dbReference type="RefSeq" id="XP_006244127.1">
    <property type="nucleotide sequence ID" value="XM_006244065.3"/>
</dbReference>
<dbReference type="RefSeq" id="XP_006244129.1">
    <property type="nucleotide sequence ID" value="XM_006244067.3"/>
</dbReference>
<dbReference type="RefSeq" id="XP_008764891.1">
    <property type="nucleotide sequence ID" value="XM_008766669.2"/>
</dbReference>
<dbReference type="RefSeq" id="XP_038936782.1">
    <molecule id="Q63327-1"/>
    <property type="nucleotide sequence ID" value="XM_039080854.2"/>
</dbReference>
<dbReference type="RefSeq" id="XP_038936783.1">
    <molecule id="Q63327-1"/>
    <property type="nucleotide sequence ID" value="XM_039080855.2"/>
</dbReference>
<dbReference type="RefSeq" id="XP_038936784.1">
    <molecule id="Q63327-1"/>
    <property type="nucleotide sequence ID" value="XM_039080856.2"/>
</dbReference>
<dbReference type="RefSeq" id="XP_038936785.1">
    <molecule id="Q63327-1"/>
    <property type="nucleotide sequence ID" value="XM_039080857.2"/>
</dbReference>
<dbReference type="RefSeq" id="XP_038936786.1">
    <molecule id="Q63327-1"/>
    <property type="nucleotide sequence ID" value="XM_039080858.2"/>
</dbReference>
<dbReference type="RefSeq" id="XP_038936787.1">
    <molecule id="Q63327-1"/>
    <property type="nucleotide sequence ID" value="XM_039080859.1"/>
</dbReference>
<dbReference type="RefSeq" id="XP_038936788.1">
    <molecule id="Q63327-2"/>
    <property type="nucleotide sequence ID" value="XM_039080860.2"/>
</dbReference>
<dbReference type="RefSeq" id="XP_038936789.1">
    <molecule id="Q63327-2"/>
    <property type="nucleotide sequence ID" value="XM_039080861.1"/>
</dbReference>
<dbReference type="RefSeq" id="XP_038936790.1">
    <molecule id="Q63327-5"/>
    <property type="nucleotide sequence ID" value="XM_039080862.2"/>
</dbReference>
<dbReference type="RefSeq" id="XP_038936791.1">
    <molecule id="Q63327-5"/>
    <property type="nucleotide sequence ID" value="XM_039080863.2"/>
</dbReference>
<dbReference type="RefSeq" id="XP_063121009.1">
    <molecule id="Q63327-2"/>
    <property type="nucleotide sequence ID" value="XM_063264939.1"/>
</dbReference>
<dbReference type="RefSeq" id="XP_063121010.1">
    <molecule id="Q63327-5"/>
    <property type="nucleotide sequence ID" value="XM_063264940.1"/>
</dbReference>
<dbReference type="SMR" id="Q63327"/>
<dbReference type="BioGRID" id="247116">
    <property type="interactions" value="1"/>
</dbReference>
<dbReference type="FunCoup" id="Q63327">
    <property type="interactions" value="82"/>
</dbReference>
<dbReference type="STRING" id="10116.ENSRNOP00000025279"/>
<dbReference type="iPTMnet" id="Q63327"/>
<dbReference type="PhosphoSitePlus" id="Q63327"/>
<dbReference type="SwissPalm" id="Q63327"/>
<dbReference type="PaxDb" id="10116-ENSRNOP00000025279"/>
<dbReference type="Ensembl" id="ENSRNOT00000025279.6">
    <molecule id="Q63327-1"/>
    <property type="protein sequence ID" value="ENSRNOP00000025279.3"/>
    <property type="gene ID" value="ENSRNOG00000018700.9"/>
</dbReference>
<dbReference type="Ensembl" id="ENSRNOT00000025343.9">
    <molecule id="Q63327-5"/>
    <property type="protein sequence ID" value="ENSRNOP00000025344.5"/>
    <property type="gene ID" value="ENSRNOG00000018700.9"/>
</dbReference>
<dbReference type="Ensembl" id="ENSRNOT00000104512.1">
    <molecule id="Q63327-4"/>
    <property type="protein sequence ID" value="ENSRNOP00000080049.1"/>
    <property type="gene ID" value="ENSRNOG00000018700.9"/>
</dbReference>
<dbReference type="GeneID" id="25037"/>
<dbReference type="KEGG" id="rno:25037"/>
<dbReference type="UCSC" id="RGD:3101">
    <molecule id="Q63327-1"/>
    <property type="organism name" value="rat"/>
</dbReference>
<dbReference type="AGR" id="RGD:3101"/>
<dbReference type="CTD" id="4336"/>
<dbReference type="RGD" id="3101">
    <property type="gene designation" value="Mobp"/>
</dbReference>
<dbReference type="eggNOG" id="ENOG502TDAR">
    <property type="taxonomic scope" value="Eukaryota"/>
</dbReference>
<dbReference type="GeneTree" id="ENSGT00950000183138"/>
<dbReference type="HOGENOM" id="CLU_2855470_0_0_1"/>
<dbReference type="InParanoid" id="Q63327"/>
<dbReference type="OMA" id="FIIRCCP"/>
<dbReference type="PhylomeDB" id="Q63327"/>
<dbReference type="PRO" id="PR:Q63327"/>
<dbReference type="Proteomes" id="UP000002494">
    <property type="component" value="Chromosome 8"/>
</dbReference>
<dbReference type="Bgee" id="ENSRNOG00000018700">
    <property type="expression patterns" value="Expressed in cerebellum and 4 other cell types or tissues"/>
</dbReference>
<dbReference type="ExpressionAtlas" id="Q63327">
    <property type="expression patterns" value="baseline and differential"/>
</dbReference>
<dbReference type="GO" id="GO:0005739">
    <property type="term" value="C:mitochondrion"/>
    <property type="evidence" value="ECO:0000266"/>
    <property type="project" value="RGD"/>
</dbReference>
<dbReference type="GO" id="GO:0048471">
    <property type="term" value="C:perinuclear region of cytoplasm"/>
    <property type="evidence" value="ECO:0007669"/>
    <property type="project" value="UniProtKB-SubCell"/>
</dbReference>
<dbReference type="GO" id="GO:0019911">
    <property type="term" value="F:structural constituent of myelin sheath"/>
    <property type="evidence" value="ECO:0000314"/>
    <property type="project" value="RGD"/>
</dbReference>
<dbReference type="GO" id="GO:0032289">
    <property type="term" value="P:central nervous system myelin formation"/>
    <property type="evidence" value="ECO:0000270"/>
    <property type="project" value="RGD"/>
</dbReference>
<dbReference type="GO" id="GO:0007399">
    <property type="term" value="P:nervous system development"/>
    <property type="evidence" value="ECO:0000270"/>
    <property type="project" value="RGD"/>
</dbReference>
<dbReference type="InterPro" id="IPR041282">
    <property type="entry name" value="FYVE_2"/>
</dbReference>
<dbReference type="InterPro" id="IPR051745">
    <property type="entry name" value="Intracell_Transport_Effector"/>
</dbReference>
<dbReference type="PANTHER" id="PTHR14555">
    <property type="entry name" value="MYELIN-ASSOCIATED OLIGODENDROCYTIC BASIC PROTEIN MOBP -RELATED"/>
    <property type="match status" value="1"/>
</dbReference>
<dbReference type="PANTHER" id="PTHR14555:SF6">
    <property type="entry name" value="RAB EFFECTOR MYRIP"/>
    <property type="match status" value="1"/>
</dbReference>
<dbReference type="Pfam" id="PF02318">
    <property type="entry name" value="FYVE_2"/>
    <property type="match status" value="1"/>
</dbReference>
<evidence type="ECO:0000256" key="1">
    <source>
        <dbReference type="SAM" id="MobiDB-lite"/>
    </source>
</evidence>
<evidence type="ECO:0000269" key="2">
    <source>
    </source>
</evidence>
<evidence type="ECO:0000269" key="3">
    <source>
    </source>
</evidence>
<evidence type="ECO:0000269" key="4">
    <source>
    </source>
</evidence>
<evidence type="ECO:0000303" key="5">
    <source>
    </source>
</evidence>
<evidence type="ECO:0000303" key="6">
    <source>
    </source>
</evidence>
<evidence type="ECO:0000303" key="7">
    <source>
    </source>
</evidence>
<evidence type="ECO:0000303" key="8">
    <source>
    </source>
</evidence>
<evidence type="ECO:0007744" key="9">
    <source>
    </source>
</evidence>
<accession>Q63327</accession>
<accession>Q63328</accession>
<accession>Q63343</accession>
<accession>Q63519</accession>
<accession>Q64266</accession>
<accession>Q9QZV5</accession>
<organism>
    <name type="scientific">Rattus norvegicus</name>
    <name type="common">Rat</name>
    <dbReference type="NCBI Taxonomy" id="10116"/>
    <lineage>
        <taxon>Eukaryota</taxon>
        <taxon>Metazoa</taxon>
        <taxon>Chordata</taxon>
        <taxon>Craniata</taxon>
        <taxon>Vertebrata</taxon>
        <taxon>Euteleostomi</taxon>
        <taxon>Mammalia</taxon>
        <taxon>Eutheria</taxon>
        <taxon>Euarchontoglires</taxon>
        <taxon>Glires</taxon>
        <taxon>Rodentia</taxon>
        <taxon>Myomorpha</taxon>
        <taxon>Muroidea</taxon>
        <taxon>Muridae</taxon>
        <taxon>Murinae</taxon>
        <taxon>Rattus</taxon>
    </lineage>
</organism>
<feature type="chain" id="PRO_0000281027" description="Myelin-associated oligodendrocyte basic protein">
    <location>
        <begin position="1"/>
        <end position="170"/>
    </location>
</feature>
<feature type="repeat" description="1">
    <location>
        <begin position="93"/>
        <end position="101"/>
    </location>
</feature>
<feature type="repeat" description="2; half-length">
    <location>
        <begin position="105"/>
        <end position="110"/>
    </location>
</feature>
<feature type="repeat" description="3">
    <location>
        <begin position="111"/>
        <end position="119"/>
    </location>
</feature>
<feature type="region of interest" description="Disordered" evidence="1">
    <location>
        <begin position="69"/>
        <end position="170"/>
    </location>
</feature>
<feature type="region of interest" description="3 X 9 AA approximate tandem repeats">
    <location>
        <begin position="93"/>
        <end position="119"/>
    </location>
</feature>
<feature type="compositionally biased region" description="Low complexity" evidence="1">
    <location>
        <begin position="82"/>
        <end position="92"/>
    </location>
</feature>
<feature type="compositionally biased region" description="Pro residues" evidence="1">
    <location>
        <begin position="93"/>
        <end position="114"/>
    </location>
</feature>
<feature type="compositionally biased region" description="Basic and acidic residues" evidence="1">
    <location>
        <begin position="118"/>
        <end position="130"/>
    </location>
</feature>
<feature type="compositionally biased region" description="Low complexity" evidence="1">
    <location>
        <begin position="138"/>
        <end position="151"/>
    </location>
</feature>
<feature type="modified residue" description="Phosphoserine" evidence="9">
    <location>
        <position position="85"/>
    </location>
</feature>
<feature type="modified residue" description="Phosphoserine" evidence="9">
    <location>
        <position position="98"/>
    </location>
</feature>
<feature type="modified residue" description="Phosphoserine" evidence="9">
    <location>
        <position position="107"/>
    </location>
</feature>
<feature type="splice variant" id="VSP_023943" description="In isoform 4." evidence="8">
    <original>SRRATSPQKPKHQPAASPVVVRAPPAKPKSP</original>
    <variation>RIRAYAYILTAHNPVLVIAYIRRSHRSHSFF</variation>
    <location>
        <begin position="69"/>
        <end position="99"/>
    </location>
</feature>
<feature type="splice variant" id="VSP_023944" description="In isoform 5." evidence="6 8">
    <original>SRRATSPQKPKHQ</original>
    <variation>RLRRRSRSTPRKK</variation>
    <location>
        <begin position="69"/>
        <end position="81"/>
    </location>
</feature>
<feature type="splice variant" id="VSP_023945" description="In isoform 6." evidence="7">
    <original>SRR</original>
    <variation>RTV</variation>
    <location>
        <begin position="69"/>
        <end position="71"/>
    </location>
</feature>
<feature type="splice variant" id="VSP_023946" description="In isoform 3." evidence="8">
    <original>S</original>
    <variation>R</variation>
    <location>
        <position position="69"/>
    </location>
</feature>
<feature type="splice variant" id="VSP_023947" description="In isoform 3." evidence="8">
    <location>
        <begin position="70"/>
        <end position="170"/>
    </location>
</feature>
<feature type="splice variant" id="VSP_023948" description="In isoform 6." evidence="7">
    <location>
        <begin position="72"/>
        <end position="170"/>
    </location>
</feature>
<feature type="splice variant" id="VSP_023949" description="In isoform 5." evidence="6 8">
    <location>
        <begin position="82"/>
        <end position="170"/>
    </location>
</feature>
<feature type="splice variant" id="VSP_023950" description="In isoform 4." evidence="8">
    <location>
        <begin position="100"/>
        <end position="170"/>
    </location>
</feature>
<feature type="splice variant" id="VSP_023951" description="In isoform 2." evidence="5">
    <location>
        <position position="170"/>
    </location>
</feature>
<name>MOBP_RAT</name>
<proteinExistence type="evidence at protein level"/>
<sequence>MSQKVAKEGPRLSKNQKFSEHFSIHCCPPFTFLNSKREIVDRKYSICKSGCFYQKKEEDWICCACQKTSRRATSPQKPKHQPAASPVVVRAPPAKPKSPPRPAKPRSPPIPAKPRSPSRTERQPRPRPEVRPPPAKQKPPQKSKQPARSSPLRGPGTSRGGSPTRAPRFW</sequence>